<dbReference type="EC" id="3.2.1.23" evidence="1"/>
<dbReference type="EMBL" id="CP000510">
    <property type="protein sequence ID" value="ABM03783.1"/>
    <property type="molecule type" value="Genomic_DNA"/>
</dbReference>
<dbReference type="RefSeq" id="WP_011770343.1">
    <property type="nucleotide sequence ID" value="NC_008709.1"/>
</dbReference>
<dbReference type="SMR" id="A1SWB8"/>
<dbReference type="STRING" id="357804.Ping_2019"/>
<dbReference type="CAZy" id="GH2">
    <property type="family name" value="Glycoside Hydrolase Family 2"/>
</dbReference>
<dbReference type="KEGG" id="pin:Ping_2019"/>
<dbReference type="eggNOG" id="COG3250">
    <property type="taxonomic scope" value="Bacteria"/>
</dbReference>
<dbReference type="HOGENOM" id="CLU_002346_0_2_6"/>
<dbReference type="OrthoDB" id="9758603at2"/>
<dbReference type="Proteomes" id="UP000000639">
    <property type="component" value="Chromosome"/>
</dbReference>
<dbReference type="GO" id="GO:0009341">
    <property type="term" value="C:beta-galactosidase complex"/>
    <property type="evidence" value="ECO:0007669"/>
    <property type="project" value="InterPro"/>
</dbReference>
<dbReference type="GO" id="GO:0004565">
    <property type="term" value="F:beta-galactosidase activity"/>
    <property type="evidence" value="ECO:0007669"/>
    <property type="project" value="UniProtKB-EC"/>
</dbReference>
<dbReference type="GO" id="GO:0030246">
    <property type="term" value="F:carbohydrate binding"/>
    <property type="evidence" value="ECO:0007669"/>
    <property type="project" value="InterPro"/>
</dbReference>
<dbReference type="GO" id="GO:0000287">
    <property type="term" value="F:magnesium ion binding"/>
    <property type="evidence" value="ECO:0007669"/>
    <property type="project" value="UniProtKB-UniRule"/>
</dbReference>
<dbReference type="GO" id="GO:0005990">
    <property type="term" value="P:lactose catabolic process"/>
    <property type="evidence" value="ECO:0007669"/>
    <property type="project" value="TreeGrafter"/>
</dbReference>
<dbReference type="FunFam" id="3.20.20.80:FF:000018">
    <property type="entry name" value="Beta-galactosidase"/>
    <property type="match status" value="1"/>
</dbReference>
<dbReference type="Gene3D" id="2.70.98.10">
    <property type="match status" value="1"/>
</dbReference>
<dbReference type="Gene3D" id="2.60.120.260">
    <property type="entry name" value="Galactose-binding domain-like"/>
    <property type="match status" value="1"/>
</dbReference>
<dbReference type="Gene3D" id="3.20.20.80">
    <property type="entry name" value="Glycosidases"/>
    <property type="match status" value="1"/>
</dbReference>
<dbReference type="Gene3D" id="2.60.40.10">
    <property type="entry name" value="Immunoglobulins"/>
    <property type="match status" value="2"/>
</dbReference>
<dbReference type="HAMAP" id="MF_01687">
    <property type="entry name" value="Beta_gal"/>
    <property type="match status" value="1"/>
</dbReference>
<dbReference type="InterPro" id="IPR004199">
    <property type="entry name" value="B-gal_small/dom_5"/>
</dbReference>
<dbReference type="InterPro" id="IPR050347">
    <property type="entry name" value="Bact_Beta-galactosidase"/>
</dbReference>
<dbReference type="InterPro" id="IPR036156">
    <property type="entry name" value="Beta-gal/glucu_dom_sf"/>
</dbReference>
<dbReference type="InterPro" id="IPR011013">
    <property type="entry name" value="Gal_mutarotase_sf_dom"/>
</dbReference>
<dbReference type="InterPro" id="IPR008979">
    <property type="entry name" value="Galactose-bd-like_sf"/>
</dbReference>
<dbReference type="InterPro" id="IPR014718">
    <property type="entry name" value="GH-type_carb-bd"/>
</dbReference>
<dbReference type="InterPro" id="IPR006101">
    <property type="entry name" value="Glyco_hydro_2"/>
</dbReference>
<dbReference type="InterPro" id="IPR023232">
    <property type="entry name" value="Glyco_hydro_2_AS"/>
</dbReference>
<dbReference type="InterPro" id="IPR023933">
    <property type="entry name" value="Glyco_hydro_2_beta_Galsidase"/>
</dbReference>
<dbReference type="InterPro" id="IPR006103">
    <property type="entry name" value="Glyco_hydro_2_cat"/>
</dbReference>
<dbReference type="InterPro" id="IPR023230">
    <property type="entry name" value="Glyco_hydro_2_CS"/>
</dbReference>
<dbReference type="InterPro" id="IPR006102">
    <property type="entry name" value="Glyco_hydro_2_Ig-like"/>
</dbReference>
<dbReference type="InterPro" id="IPR006104">
    <property type="entry name" value="Glyco_hydro_2_N"/>
</dbReference>
<dbReference type="InterPro" id="IPR017853">
    <property type="entry name" value="Glycoside_hydrolase_SF"/>
</dbReference>
<dbReference type="InterPro" id="IPR013783">
    <property type="entry name" value="Ig-like_fold"/>
</dbReference>
<dbReference type="InterPro" id="IPR032312">
    <property type="entry name" value="LacZ_4"/>
</dbReference>
<dbReference type="NCBIfam" id="NF007074">
    <property type="entry name" value="PRK09525.1"/>
    <property type="match status" value="1"/>
</dbReference>
<dbReference type="PANTHER" id="PTHR46323">
    <property type="entry name" value="BETA-GALACTOSIDASE"/>
    <property type="match status" value="1"/>
</dbReference>
<dbReference type="PANTHER" id="PTHR46323:SF2">
    <property type="entry name" value="BETA-GALACTOSIDASE"/>
    <property type="match status" value="1"/>
</dbReference>
<dbReference type="Pfam" id="PF02929">
    <property type="entry name" value="Bgal_small_N"/>
    <property type="match status" value="1"/>
</dbReference>
<dbReference type="Pfam" id="PF00703">
    <property type="entry name" value="Glyco_hydro_2"/>
    <property type="match status" value="1"/>
</dbReference>
<dbReference type="Pfam" id="PF02836">
    <property type="entry name" value="Glyco_hydro_2_C"/>
    <property type="match status" value="1"/>
</dbReference>
<dbReference type="Pfam" id="PF02837">
    <property type="entry name" value="Glyco_hydro_2_N"/>
    <property type="match status" value="1"/>
</dbReference>
<dbReference type="Pfam" id="PF16353">
    <property type="entry name" value="LacZ_4"/>
    <property type="match status" value="1"/>
</dbReference>
<dbReference type="PRINTS" id="PR00132">
    <property type="entry name" value="GLHYDRLASE2"/>
</dbReference>
<dbReference type="SMART" id="SM01038">
    <property type="entry name" value="Bgal_small_N"/>
    <property type="match status" value="1"/>
</dbReference>
<dbReference type="SUPFAM" id="SSF51445">
    <property type="entry name" value="(Trans)glycosidases"/>
    <property type="match status" value="1"/>
</dbReference>
<dbReference type="SUPFAM" id="SSF49303">
    <property type="entry name" value="beta-Galactosidase/glucuronidase domain"/>
    <property type="match status" value="2"/>
</dbReference>
<dbReference type="SUPFAM" id="SSF74650">
    <property type="entry name" value="Galactose mutarotase-like"/>
    <property type="match status" value="1"/>
</dbReference>
<dbReference type="SUPFAM" id="SSF49785">
    <property type="entry name" value="Galactose-binding domain-like"/>
    <property type="match status" value="1"/>
</dbReference>
<dbReference type="PROSITE" id="PS00719">
    <property type="entry name" value="GLYCOSYL_HYDROL_F2_1"/>
    <property type="match status" value="1"/>
</dbReference>
<dbReference type="PROSITE" id="PS00608">
    <property type="entry name" value="GLYCOSYL_HYDROL_F2_2"/>
    <property type="match status" value="1"/>
</dbReference>
<evidence type="ECO:0000255" key="1">
    <source>
        <dbReference type="HAMAP-Rule" id="MF_01687"/>
    </source>
</evidence>
<organism>
    <name type="scientific">Psychromonas ingrahamii (strain DSM 17664 / CCUG 51855 / 37)</name>
    <dbReference type="NCBI Taxonomy" id="357804"/>
    <lineage>
        <taxon>Bacteria</taxon>
        <taxon>Pseudomonadati</taxon>
        <taxon>Pseudomonadota</taxon>
        <taxon>Gammaproteobacteria</taxon>
        <taxon>Alteromonadales</taxon>
        <taxon>Psychromonadaceae</taxon>
        <taxon>Psychromonas</taxon>
    </lineage>
</organism>
<accession>A1SWB8</accession>
<feature type="chain" id="PRO_0000367006" description="Beta-galactosidase">
    <location>
        <begin position="1"/>
        <end position="1035"/>
    </location>
</feature>
<feature type="active site" description="Proton donor" evidence="1">
    <location>
        <position position="460"/>
    </location>
</feature>
<feature type="active site" description="Nucleophile" evidence="1">
    <location>
        <position position="540"/>
    </location>
</feature>
<feature type="binding site" evidence="1">
    <location>
        <position position="101"/>
    </location>
    <ligand>
        <name>substrate</name>
    </ligand>
</feature>
<feature type="binding site" evidence="1">
    <location>
        <position position="199"/>
    </location>
    <ligand>
        <name>Na(+)</name>
        <dbReference type="ChEBI" id="CHEBI:29101"/>
    </ligand>
</feature>
<feature type="binding site" evidence="1">
    <location>
        <position position="199"/>
    </location>
    <ligand>
        <name>substrate</name>
    </ligand>
</feature>
<feature type="binding site" evidence="1">
    <location>
        <position position="415"/>
    </location>
    <ligand>
        <name>Mg(2+)</name>
        <dbReference type="ChEBI" id="CHEBI:18420"/>
        <label>1</label>
    </ligand>
</feature>
<feature type="binding site" evidence="1">
    <location>
        <position position="417"/>
    </location>
    <ligand>
        <name>Mg(2+)</name>
        <dbReference type="ChEBI" id="CHEBI:18420"/>
        <label>1</label>
    </ligand>
</feature>
<feature type="binding site" evidence="1">
    <location>
        <position position="460"/>
    </location>
    <ligand>
        <name>Mg(2+)</name>
        <dbReference type="ChEBI" id="CHEBI:18420"/>
        <label>1</label>
    </ligand>
</feature>
<feature type="binding site" evidence="1">
    <location>
        <position position="460"/>
    </location>
    <ligand>
        <name>substrate</name>
    </ligand>
</feature>
<feature type="binding site" evidence="1">
    <location>
        <begin position="540"/>
        <end position="543"/>
    </location>
    <ligand>
        <name>substrate</name>
    </ligand>
</feature>
<feature type="binding site" evidence="1">
    <location>
        <position position="600"/>
    </location>
    <ligand>
        <name>Mg(2+)</name>
        <dbReference type="ChEBI" id="CHEBI:18420"/>
        <label>2</label>
    </ligand>
</feature>
<feature type="binding site" evidence="1">
    <location>
        <position position="604"/>
    </location>
    <ligand>
        <name>Na(+)</name>
        <dbReference type="ChEBI" id="CHEBI:29101"/>
    </ligand>
</feature>
<feature type="binding site" evidence="1">
    <location>
        <position position="607"/>
    </location>
    <ligand>
        <name>Na(+)</name>
        <dbReference type="ChEBI" id="CHEBI:29101"/>
    </ligand>
</feature>
<feature type="binding site" evidence="1">
    <location>
        <position position="607"/>
    </location>
    <ligand>
        <name>substrate</name>
    </ligand>
</feature>
<feature type="binding site" evidence="1">
    <location>
        <position position="1011"/>
    </location>
    <ligand>
        <name>substrate</name>
    </ligand>
</feature>
<feature type="site" description="Transition state stabilizer" evidence="1">
    <location>
        <position position="356"/>
    </location>
</feature>
<feature type="site" description="Transition state stabilizer" evidence="1">
    <location>
        <position position="390"/>
    </location>
</feature>
<gene>
    <name evidence="1" type="primary">lacZ</name>
    <name type="ordered locus">Ping_2019</name>
</gene>
<proteinExistence type="inferred from homology"/>
<comment type="catalytic activity">
    <reaction evidence="1">
        <text>Hydrolysis of terminal non-reducing beta-D-galactose residues in beta-D-galactosides.</text>
        <dbReference type="EC" id="3.2.1.23"/>
    </reaction>
</comment>
<comment type="cofactor">
    <cofactor evidence="1">
        <name>Mg(2+)</name>
        <dbReference type="ChEBI" id="CHEBI:18420"/>
    </cofactor>
    <text evidence="1">Binds 2 magnesium ions per monomer.</text>
</comment>
<comment type="cofactor">
    <cofactor evidence="1">
        <name>Na(+)</name>
        <dbReference type="ChEBI" id="CHEBI:29101"/>
    </cofactor>
    <text evidence="1">Binds 1 sodium ion per monomer.</text>
</comment>
<comment type="subunit">
    <text evidence="1">Homotetramer.</text>
</comment>
<comment type="similarity">
    <text evidence="1">Belongs to the glycosyl hydrolase 2 family.</text>
</comment>
<protein>
    <recommendedName>
        <fullName evidence="1">Beta-galactosidase</fullName>
        <shortName evidence="1">Beta-gal</shortName>
        <ecNumber evidence="1">3.2.1.23</ecNumber>
    </recommendedName>
    <alternativeName>
        <fullName evidence="1">Lactase</fullName>
    </alternativeName>
</protein>
<reference key="1">
    <citation type="journal article" date="2008" name="BMC Genomics">
        <title>Genomics of an extreme psychrophile, Psychromonas ingrahamii.</title>
        <authorList>
            <person name="Riley M."/>
            <person name="Staley J.T."/>
            <person name="Danchin A."/>
            <person name="Wang T.Z."/>
            <person name="Brettin T.S."/>
            <person name="Hauser L.J."/>
            <person name="Land M.L."/>
            <person name="Thompson L.S."/>
        </authorList>
    </citation>
    <scope>NUCLEOTIDE SEQUENCE [LARGE SCALE GENOMIC DNA]</scope>
    <source>
        <strain>DSM 17664 / CCUG 51855 / 37</strain>
    </source>
</reference>
<sequence length="1035" mass="117460">MREFSEIIKARDWENQEVTHQHVVQAHAPLHAFHSKQAALDNQASEFQQLLNGQWRFQLFAKPEAVPNHCINIDFDDSAWSDITVPSNWQLQGYDKPIYTNVKYPFADNPPFVPADNPTGVYRLNFTLPTAWKERKNTVIFDGVNSAFHLWCNGIWVGYSQDSRLPAEFDLSCHLQAGDNQLTVMVLRWSDGSYLEDQDMWWLSGIFRDVCLLSKPLISIRDITVSTELDACFNHGSINVVTQLSEQSSQYTAQVQLFDAQLQPVTKLVGAPFGERMIDEKGPANDRAEHKIAVPSPHKWSSESPYLYRVVISLVDNEGQVVDSEAYQVGFRVVEMSNGQLKLNGEALLIRGVNRHEHHPEKGHAISYEDMLVDIKLLKQNNFNAVRTAHYPNHPLWYELCDQYGLYVVDEANLETHGQFPMSRLSNDLSWLNAYMRRMTRMVERDKNHPSIIIWSLGNESGLGHHHHAMYQWTKRRDPTRPVQYEGGGADTAATDIIVPMYARVNKDITLPNAPDVVPKMAIKKWLSMPNEQRPLILCEYAHAMGNSLGSFDKYWQAFREYPRLQGGFIWDWVDQGLTKIDDNGDNYWAYGGDFGDQINDRQFCINGLVFPDRSLHPTVYEAKKAQQFYQFSLVDGDQLKVKIDSENLFIESMDETLCWSVTEAGYVIASGEMELHVTAQSSKILTLLESYPEQKIGCDYFLNIEIVLNKDKPWATKGFVVATEQVALASIAQLTNVPLIESGAPRLSEDKNKITVAGTGSGAEFELEIDKQQGVISQWLVRGENKILQGPKDNFFRAPLDNDIGTSEADCIDPNAWVTQWDTAGIANLVPHCIAIEAVTLARSVLVKVEFGHYVENKLLISSHWQYTINNQGEVQIDVNVNLAKSLSPLPRIGLELILPDSEKPVNWFGRGPHENYPDRILSAHIARHCCSIEEMHTPYIFPSENGLRCDVKDAIVGDLTVSGDFHLAVSRYSQMNIAQAKHVNDLINDHQLYVRLDAFHMGVGGDDSWSPSVHDEFLLNKEHYHYQMILAFN</sequence>
<keyword id="KW-0326">Glycosidase</keyword>
<keyword id="KW-0378">Hydrolase</keyword>
<keyword id="KW-0460">Magnesium</keyword>
<keyword id="KW-0479">Metal-binding</keyword>
<keyword id="KW-1185">Reference proteome</keyword>
<keyword id="KW-0915">Sodium</keyword>
<name>BGAL_PSYIN</name>